<sequence length="530" mass="57549">MRRDSDMASHIQQPGGHGNPGPAPSPSPGPGPGPGASERVALKKEIGLVSACTIIIGNIIGSGIFISPKGVLEHSGSVGLALFVWVLGGGVTALGSLCYAELGVAIPKSGGDYAYVTEIFGGLAGFLLLWSAVLIMYPTSLAVISMTFSNYVLQPVFPNCIPPATASRVLSMACLMLLTWVNSSSVRWATRIQVIFTGGKLLALSLIITVGFVQIFQGHFEELRPTNAFAFWMTPSVGHLALAFLQGSFAFSGWNFLNYVTEELVDPRKNLPRAIFISIPLVTFVYTFTNVAYFTAMSPQELLSSNAVAVTFGEKLLGYFSWVMPVSVALSTFGGINGYLFTSSRLCFSGAREGHLPSFLAMIHVRRCTPIPALLVCCGATAVIMLVGDTYTLINYVSFINYLCYGVTILGLLVLRWRRPALHRPIKVNLLVPVVYLVFWAFLLVFSFISEPMVCGVGIIIILTGVPIFFLGVFWRSKPKCVHRFTESMTRWGQELCFVVYPQGSLEEEENGPMGQPSPLPITDKPLKTQ</sequence>
<dbReference type="EMBL" id="AJ313387">
    <property type="protein sequence ID" value="CAC42885.1"/>
    <property type="molecule type" value="mRNA"/>
</dbReference>
<dbReference type="SMR" id="P63116"/>
<dbReference type="FunCoup" id="P63116">
    <property type="interactions" value="673"/>
</dbReference>
<dbReference type="STRING" id="10116.ENSRNOP00000015205"/>
<dbReference type="ChEMBL" id="CHEMBL4105976"/>
<dbReference type="DrugCentral" id="P63116"/>
<dbReference type="PhosphoSitePlus" id="P63116"/>
<dbReference type="PaxDb" id="10116-ENSRNOP00000015205"/>
<dbReference type="UCSC" id="RGD:621672">
    <property type="organism name" value="rat"/>
</dbReference>
<dbReference type="AGR" id="RGD:621672"/>
<dbReference type="RGD" id="621672">
    <property type="gene designation" value="Slc7a10"/>
</dbReference>
<dbReference type="eggNOG" id="KOG1287">
    <property type="taxonomic scope" value="Eukaryota"/>
</dbReference>
<dbReference type="InParanoid" id="P63116"/>
<dbReference type="PhylomeDB" id="P63116"/>
<dbReference type="Reactome" id="R-RNO-210991">
    <property type="pathway name" value="Basigin interactions"/>
</dbReference>
<dbReference type="Reactome" id="R-RNO-352230">
    <property type="pathway name" value="Amino acid transport across the plasma membrane"/>
</dbReference>
<dbReference type="PRO" id="PR:P63116"/>
<dbReference type="Proteomes" id="UP000002494">
    <property type="component" value="Unplaced"/>
</dbReference>
<dbReference type="GO" id="GO:0097440">
    <property type="term" value="C:apical dendrite"/>
    <property type="evidence" value="ECO:0000314"/>
    <property type="project" value="RGD"/>
</dbReference>
<dbReference type="GO" id="GO:0043025">
    <property type="term" value="C:neuronal cell body"/>
    <property type="evidence" value="ECO:0000314"/>
    <property type="project" value="RGD"/>
</dbReference>
<dbReference type="GO" id="GO:0005886">
    <property type="term" value="C:plasma membrane"/>
    <property type="evidence" value="ECO:0000266"/>
    <property type="project" value="RGD"/>
</dbReference>
<dbReference type="GO" id="GO:0015179">
    <property type="term" value="F:L-amino acid transmembrane transporter activity"/>
    <property type="evidence" value="ECO:0000318"/>
    <property type="project" value="GO_Central"/>
</dbReference>
<dbReference type="GO" id="GO:0015175">
    <property type="term" value="F:neutral L-amino acid transmembrane transporter activity"/>
    <property type="evidence" value="ECO:0000250"/>
    <property type="project" value="UniProtKB"/>
</dbReference>
<dbReference type="GO" id="GO:0042941">
    <property type="term" value="P:D-alanine transmembrane transport"/>
    <property type="evidence" value="ECO:0000266"/>
    <property type="project" value="RGD"/>
</dbReference>
<dbReference type="GO" id="GO:0042942">
    <property type="term" value="P:D-serine transmembrane transport"/>
    <property type="evidence" value="ECO:0000266"/>
    <property type="project" value="RGD"/>
</dbReference>
<dbReference type="GO" id="GO:0015816">
    <property type="term" value="P:glycine transport"/>
    <property type="evidence" value="ECO:0000266"/>
    <property type="project" value="RGD"/>
</dbReference>
<dbReference type="GO" id="GO:1903444">
    <property type="term" value="P:negative regulation of brown fat cell differentiation"/>
    <property type="evidence" value="ECO:0000266"/>
    <property type="project" value="RGD"/>
</dbReference>
<dbReference type="GO" id="GO:0015804">
    <property type="term" value="P:neutral amino acid transport"/>
    <property type="evidence" value="ECO:0000250"/>
    <property type="project" value="UniProtKB"/>
</dbReference>
<dbReference type="GO" id="GO:0060094">
    <property type="term" value="P:positive regulation of synaptic transmission, glycinergic"/>
    <property type="evidence" value="ECO:0000266"/>
    <property type="project" value="RGD"/>
</dbReference>
<dbReference type="FunFam" id="1.20.1740.10:FF:000008">
    <property type="entry name" value="large neutral amino acids transporter small subunit 2"/>
    <property type="match status" value="1"/>
</dbReference>
<dbReference type="Gene3D" id="1.20.1740.10">
    <property type="entry name" value="Amino acid/polyamine transporter I"/>
    <property type="match status" value="1"/>
</dbReference>
<dbReference type="InterPro" id="IPR002293">
    <property type="entry name" value="AA/rel_permease1"/>
</dbReference>
<dbReference type="InterPro" id="IPR050598">
    <property type="entry name" value="AminoAcid_Transporter"/>
</dbReference>
<dbReference type="PANTHER" id="PTHR11785">
    <property type="entry name" value="AMINO ACID TRANSPORTER"/>
    <property type="match status" value="1"/>
</dbReference>
<dbReference type="PANTHER" id="PTHR11785:SF73">
    <property type="entry name" value="ASC-TYPE AMINO ACID TRANSPORTER 1"/>
    <property type="match status" value="1"/>
</dbReference>
<dbReference type="Pfam" id="PF13520">
    <property type="entry name" value="AA_permease_2"/>
    <property type="match status" value="1"/>
</dbReference>
<dbReference type="PIRSF" id="PIRSF006060">
    <property type="entry name" value="AA_transporter"/>
    <property type="match status" value="1"/>
</dbReference>
<comment type="function">
    <text evidence="1 4">Associates with SLC3A2/4F2hc to form a functional heterodimeric complex that translocates small neutral L- and D-amino acids across the plasma membrane. Preferentially mediates exchange transport, but can also operate via facilitated diffusion (By similarity) (PubMed:23426681). Acts as a major transporter for glycine, L- and D-serine in the central nervous system. At the spinal cord and brainstem regulates glycine metabolism and glycinergic inhibitory neurotransmission by providing for glycine de novo synthesis from L-serine and glycine recycling from astrocytes to glycinergic motor neurons (By similarity). At Schaffer collateral-CA1 synapses mediates D-serine and glycine release that modulates post-synaptic activation of NMDA receptors and excitatory glutamatergic transmission (PubMed:23426681). May regulate D-serine release from mesenchymal progenitors located in developing subcutaneous adipose tissue, favoring white adipocyte over thermogenic beige adipocyte lineage commitment (By similarity).</text>
</comment>
<comment type="catalytic activity">
    <reaction evidence="1">
        <text>L-alanine(in) + glycine(out) = L-alanine(out) + glycine(in)</text>
        <dbReference type="Rhea" id="RHEA:74019"/>
        <dbReference type="ChEBI" id="CHEBI:57305"/>
        <dbReference type="ChEBI" id="CHEBI:57972"/>
    </reaction>
</comment>
<comment type="catalytic activity">
    <reaction evidence="1">
        <text>L-serine(out) + L-alanine(in) = L-serine(in) + L-alanine(out)</text>
        <dbReference type="Rhea" id="RHEA:74023"/>
        <dbReference type="ChEBI" id="CHEBI:33384"/>
        <dbReference type="ChEBI" id="CHEBI:57972"/>
    </reaction>
</comment>
<comment type="catalytic activity">
    <reaction evidence="1">
        <text>L-threonine(out) + L-alanine(in) = L-threonine(in) + L-alanine(out)</text>
        <dbReference type="Rhea" id="RHEA:74027"/>
        <dbReference type="ChEBI" id="CHEBI:57926"/>
        <dbReference type="ChEBI" id="CHEBI:57972"/>
    </reaction>
</comment>
<comment type="catalytic activity">
    <reaction evidence="1">
        <text>L-cysteine(out) + L-alanine(in) = L-cysteine(in) + L-alanine(out)</text>
        <dbReference type="Rhea" id="RHEA:74031"/>
        <dbReference type="ChEBI" id="CHEBI:35235"/>
        <dbReference type="ChEBI" id="CHEBI:57972"/>
    </reaction>
</comment>
<comment type="catalytic activity">
    <reaction evidence="1">
        <text>2-aminoisobutanoate(out) + L-alanine(in) = 2-aminoisobutanoate(in) + L-alanine(out)</text>
        <dbReference type="Rhea" id="RHEA:74063"/>
        <dbReference type="ChEBI" id="CHEBI:57972"/>
        <dbReference type="ChEBI" id="CHEBI:193090"/>
    </reaction>
</comment>
<comment type="catalytic activity">
    <reaction evidence="1">
        <text>D-serine(out) + L-alanine(in) = D-serine(in) + L-alanine(out)</text>
        <dbReference type="Rhea" id="RHEA:74035"/>
        <dbReference type="ChEBI" id="CHEBI:35247"/>
        <dbReference type="ChEBI" id="CHEBI:57972"/>
    </reaction>
</comment>
<comment type="catalytic activity">
    <reaction evidence="1">
        <text>D-alanine(out) + L-alanine(in) = D-alanine(in) + L-alanine(out)</text>
        <dbReference type="Rhea" id="RHEA:74039"/>
        <dbReference type="ChEBI" id="CHEBI:57416"/>
        <dbReference type="ChEBI" id="CHEBI:57972"/>
    </reaction>
</comment>
<comment type="catalytic activity">
    <reaction evidence="1">
        <text>L-valine(out) + L-alanine(in) = L-valine(in) + L-alanine(out)</text>
        <dbReference type="Rhea" id="RHEA:74047"/>
        <dbReference type="ChEBI" id="CHEBI:57762"/>
        <dbReference type="ChEBI" id="CHEBI:57972"/>
    </reaction>
</comment>
<comment type="catalytic activity">
    <reaction evidence="1">
        <text>L-methionine(out) + L-alanine(in) = L-methionine(in) + L-alanine(out)</text>
        <dbReference type="Rhea" id="RHEA:74043"/>
        <dbReference type="ChEBI" id="CHEBI:57844"/>
        <dbReference type="ChEBI" id="CHEBI:57972"/>
    </reaction>
</comment>
<comment type="catalytic activity">
    <reaction evidence="1">
        <text>beta-alanine(out) + L-alanine(in) = beta-alanine(in) + L-alanine(out)</text>
        <dbReference type="Rhea" id="RHEA:74059"/>
        <dbReference type="ChEBI" id="CHEBI:57966"/>
        <dbReference type="ChEBI" id="CHEBI:57972"/>
    </reaction>
</comment>
<comment type="catalytic activity">
    <reaction evidence="1">
        <text>D-cysteine(out) + L-alanine(in) = D-cysteine(in) + L-alanine(out)</text>
        <dbReference type="Rhea" id="RHEA:74055"/>
        <dbReference type="ChEBI" id="CHEBI:35236"/>
        <dbReference type="ChEBI" id="CHEBI:57972"/>
    </reaction>
</comment>
<comment type="catalytic activity">
    <reaction evidence="1">
        <text>D-threonine(out) + L-alanine(in) = D-threonine(in) + L-alanine(out)</text>
        <dbReference type="Rhea" id="RHEA:74051"/>
        <dbReference type="ChEBI" id="CHEBI:57757"/>
        <dbReference type="ChEBI" id="CHEBI:57972"/>
    </reaction>
</comment>
<comment type="catalytic activity">
    <reaction evidence="4">
        <text>D-isoleucine(out) + D-serine(in) = D-isoleucine(in) + D-serine(out)</text>
        <dbReference type="Rhea" id="RHEA:74299"/>
        <dbReference type="ChEBI" id="CHEBI:35247"/>
        <dbReference type="ChEBI" id="CHEBI:193151"/>
    </reaction>
    <physiologicalReaction direction="left-to-right" evidence="5">
        <dbReference type="Rhea" id="RHEA:74300"/>
    </physiologicalReaction>
</comment>
<comment type="catalytic activity">
    <reaction evidence="4">
        <text>D-serine(in) = D-serine(out)</text>
        <dbReference type="Rhea" id="RHEA:29455"/>
        <dbReference type="ChEBI" id="CHEBI:35247"/>
    </reaction>
</comment>
<comment type="biophysicochemical properties">
    <kinetics>
        <KM evidence="4">43 uM for D-serine</KM>
    </kinetics>
</comment>
<comment type="subunit">
    <text evidence="1">Disulfide-linked heterodimer with the amino acid transport protein SLC3A2/4F2hc.</text>
</comment>
<comment type="subcellular location">
    <subcellularLocation>
        <location evidence="1">Cell membrane</location>
        <topology evidence="2">Multi-pass membrane protein</topology>
    </subcellularLocation>
    <text evidence="1">Colocalizes with OLIG2 in astrocytic processes. Localizes to the plasma membrane in mature adipocytes and to intracellular structures in preadipocytes.</text>
</comment>
<comment type="similarity">
    <text evidence="5">Belongs to the amino acid-polyamine-organocation (APC) superfamily.</text>
</comment>
<accession>P63116</accession>
<accession>Q9CW25</accession>
<accession>Q9JMH8</accession>
<gene>
    <name type="primary">Slc7a10</name>
    <name type="synonym">Asc1</name>
</gene>
<reference key="1">
    <citation type="submission" date="2001-06" db="EMBL/GenBank/DDBJ databases">
        <title>Cloning and characterization of a D-serine transporter from rat brain.</title>
        <authorList>
            <person name="Alberati-Giani D."/>
            <person name="Kew J.N."/>
        </authorList>
    </citation>
    <scope>NUCLEOTIDE SEQUENCE [MRNA]</scope>
    <source>
        <strain>Sprague-Dawley</strain>
        <tissue>Forebrain</tissue>
    </source>
</reference>
<reference key="2">
    <citation type="journal article" date="2013" name="J. Neurosci.">
        <title>Neuronal D-serine and glycine release via the Asc-1 transporter regulates NMDA receptor-dependent synaptic activity.</title>
        <authorList>
            <person name="Rosenberg D."/>
            <person name="Artoul S."/>
            <person name="Segal A.C."/>
            <person name="Kolodney G."/>
            <person name="Radzishevsky I."/>
            <person name="Dikopoltsev E."/>
            <person name="Foltyn V.N."/>
            <person name="Inoue R."/>
            <person name="Mori H."/>
            <person name="Billard J.M."/>
            <person name="Wolosker H."/>
        </authorList>
    </citation>
    <scope>FUNCTION</scope>
    <scope>TRANSPORT ACTIVITY</scope>
    <scope>BIOPHYSICOCHEMICAL PROPERTIES</scope>
</reference>
<keyword id="KW-0029">Amino-acid transport</keyword>
<keyword id="KW-1003">Cell membrane</keyword>
<keyword id="KW-1015">Disulfide bond</keyword>
<keyword id="KW-0472">Membrane</keyword>
<keyword id="KW-1185">Reference proteome</keyword>
<keyword id="KW-0812">Transmembrane</keyword>
<keyword id="KW-1133">Transmembrane helix</keyword>
<keyword id="KW-0813">Transport</keyword>
<name>AAA1_RAT</name>
<feature type="chain" id="PRO_0000054278" description="Asc-type amino acid transporter 1">
    <location>
        <begin position="1"/>
        <end position="530"/>
    </location>
</feature>
<feature type="transmembrane region" description="Helical" evidence="2">
    <location>
        <begin position="46"/>
        <end position="66"/>
    </location>
</feature>
<feature type="transmembrane region" description="Helical" evidence="2">
    <location>
        <begin position="78"/>
        <end position="98"/>
    </location>
</feature>
<feature type="transmembrane region" description="Helical" evidence="2">
    <location>
        <begin position="119"/>
        <end position="139"/>
    </location>
</feature>
<feature type="transmembrane region" description="Helical" evidence="2">
    <location>
        <begin position="192"/>
        <end position="212"/>
    </location>
</feature>
<feature type="transmembrane region" description="Helical" evidence="2">
    <location>
        <begin position="274"/>
        <end position="294"/>
    </location>
</feature>
<feature type="transmembrane region" description="Helical" evidence="2">
    <location>
        <begin position="316"/>
        <end position="336"/>
    </location>
</feature>
<feature type="transmembrane region" description="Helical" evidence="2">
    <location>
        <begin position="368"/>
        <end position="388"/>
    </location>
</feature>
<feature type="transmembrane region" description="Helical" evidence="2">
    <location>
        <begin position="394"/>
        <end position="414"/>
    </location>
</feature>
<feature type="transmembrane region" description="Helical" evidence="2">
    <location>
        <begin position="430"/>
        <end position="450"/>
    </location>
</feature>
<feature type="transmembrane region" description="Helical" evidence="2">
    <location>
        <begin position="454"/>
        <end position="474"/>
    </location>
</feature>
<feature type="region of interest" description="Disordered" evidence="3">
    <location>
        <begin position="1"/>
        <end position="36"/>
    </location>
</feature>
<feature type="region of interest" description="Disordered" evidence="3">
    <location>
        <begin position="508"/>
        <end position="530"/>
    </location>
</feature>
<feature type="compositionally biased region" description="Pro residues" evidence="3">
    <location>
        <begin position="21"/>
        <end position="33"/>
    </location>
</feature>
<proteinExistence type="evidence at protein level"/>
<organism>
    <name type="scientific">Rattus norvegicus</name>
    <name type="common">Rat</name>
    <dbReference type="NCBI Taxonomy" id="10116"/>
    <lineage>
        <taxon>Eukaryota</taxon>
        <taxon>Metazoa</taxon>
        <taxon>Chordata</taxon>
        <taxon>Craniata</taxon>
        <taxon>Vertebrata</taxon>
        <taxon>Euteleostomi</taxon>
        <taxon>Mammalia</taxon>
        <taxon>Eutheria</taxon>
        <taxon>Euarchontoglires</taxon>
        <taxon>Glires</taxon>
        <taxon>Rodentia</taxon>
        <taxon>Myomorpha</taxon>
        <taxon>Muroidea</taxon>
        <taxon>Muridae</taxon>
        <taxon>Murinae</taxon>
        <taxon>Rattus</taxon>
    </lineage>
</organism>
<protein>
    <recommendedName>
        <fullName>Asc-type amino acid transporter 1</fullName>
        <shortName>Asc-1</shortName>
    </recommendedName>
    <alternativeName>
        <fullName>D-serine transporter</fullName>
    </alternativeName>
    <alternativeName>
        <fullName>Solute carrier family 7 member 10</fullName>
    </alternativeName>
</protein>
<evidence type="ECO:0000250" key="1">
    <source>
        <dbReference type="UniProtKB" id="P63115"/>
    </source>
</evidence>
<evidence type="ECO:0000255" key="2"/>
<evidence type="ECO:0000256" key="3">
    <source>
        <dbReference type="SAM" id="MobiDB-lite"/>
    </source>
</evidence>
<evidence type="ECO:0000269" key="4">
    <source>
    </source>
</evidence>
<evidence type="ECO:0000305" key="5"/>